<proteinExistence type="inferred from homology"/>
<gene>
    <name evidence="1" type="primary">rplO</name>
    <name type="ordered locus">LIC_12854</name>
</gene>
<feature type="chain" id="PRO_0000104744" description="Large ribosomal subunit protein uL15">
    <location>
        <begin position="1"/>
        <end position="180"/>
    </location>
</feature>
<feature type="region of interest" description="Disordered" evidence="2">
    <location>
        <begin position="1"/>
        <end position="62"/>
    </location>
</feature>
<name>RL15_LEPIC</name>
<sequence length="180" mass="19865">MKKERLEQASAFGKDRVKKKKNTDTSSNLIPVPKGATKEKKRVGRGPGSKVGKTAGRGSKGQYARNTVRRGFEGGQMPIHRRLPKRGFTSKFHKEFYPVNLRDIEKSGLTGNIDAKIMVQSKILDKETTLFKILGTGEIKKAIHVIADGFSQSAKEKIEKAGGSIKLRAELKLATSETKK</sequence>
<protein>
    <recommendedName>
        <fullName evidence="1">Large ribosomal subunit protein uL15</fullName>
    </recommendedName>
    <alternativeName>
        <fullName evidence="3">50S ribosomal protein L15</fullName>
    </alternativeName>
</protein>
<reference key="1">
    <citation type="journal article" date="2004" name="J. Bacteriol.">
        <title>Comparative genomics of two Leptospira interrogans serovars reveals novel insights into physiology and pathogenesis.</title>
        <authorList>
            <person name="Nascimento A.L.T.O."/>
            <person name="Ko A.I."/>
            <person name="Martins E.A.L."/>
            <person name="Monteiro-Vitorello C.B."/>
            <person name="Ho P.L."/>
            <person name="Haake D.A."/>
            <person name="Verjovski-Almeida S."/>
            <person name="Hartskeerl R.A."/>
            <person name="Marques M.V."/>
            <person name="Oliveira M.C."/>
            <person name="Menck C.F.M."/>
            <person name="Leite L.C.C."/>
            <person name="Carrer H."/>
            <person name="Coutinho L.L."/>
            <person name="Degrave W.M."/>
            <person name="Dellagostin O.A."/>
            <person name="El-Dorry H."/>
            <person name="Ferro E.S."/>
            <person name="Ferro M.I.T."/>
            <person name="Furlan L.R."/>
            <person name="Gamberini M."/>
            <person name="Giglioti E.A."/>
            <person name="Goes-Neto A."/>
            <person name="Goldman G.H."/>
            <person name="Goldman M.H.S."/>
            <person name="Harakava R."/>
            <person name="Jeronimo S.M.B."/>
            <person name="Junqueira-de-Azevedo I.L.M."/>
            <person name="Kimura E.T."/>
            <person name="Kuramae E.E."/>
            <person name="Lemos E.G.M."/>
            <person name="Lemos M.V.F."/>
            <person name="Marino C.L."/>
            <person name="Nunes L.R."/>
            <person name="de Oliveira R.C."/>
            <person name="Pereira G.G."/>
            <person name="Reis M.S."/>
            <person name="Schriefer A."/>
            <person name="Siqueira W.J."/>
            <person name="Sommer P."/>
            <person name="Tsai S.M."/>
            <person name="Simpson A.J.G."/>
            <person name="Ferro J.A."/>
            <person name="Camargo L.E.A."/>
            <person name="Kitajima J.P."/>
            <person name="Setubal J.C."/>
            <person name="Van Sluys M.A."/>
        </authorList>
    </citation>
    <scope>NUCLEOTIDE SEQUENCE [LARGE SCALE GENOMIC DNA]</scope>
    <source>
        <strain>Fiocruz L1-130</strain>
    </source>
</reference>
<keyword id="KW-0687">Ribonucleoprotein</keyword>
<keyword id="KW-0689">Ribosomal protein</keyword>
<keyword id="KW-0694">RNA-binding</keyword>
<keyword id="KW-0699">rRNA-binding</keyword>
<evidence type="ECO:0000255" key="1">
    <source>
        <dbReference type="HAMAP-Rule" id="MF_01341"/>
    </source>
</evidence>
<evidence type="ECO:0000256" key="2">
    <source>
        <dbReference type="SAM" id="MobiDB-lite"/>
    </source>
</evidence>
<evidence type="ECO:0000305" key="3"/>
<organism>
    <name type="scientific">Leptospira interrogans serogroup Icterohaemorrhagiae serovar copenhageni (strain Fiocruz L1-130)</name>
    <dbReference type="NCBI Taxonomy" id="267671"/>
    <lineage>
        <taxon>Bacteria</taxon>
        <taxon>Pseudomonadati</taxon>
        <taxon>Spirochaetota</taxon>
        <taxon>Spirochaetia</taxon>
        <taxon>Leptospirales</taxon>
        <taxon>Leptospiraceae</taxon>
        <taxon>Leptospira</taxon>
    </lineage>
</organism>
<comment type="function">
    <text evidence="1">Binds to the 23S rRNA.</text>
</comment>
<comment type="subunit">
    <text evidence="1">Part of the 50S ribosomal subunit.</text>
</comment>
<comment type="similarity">
    <text evidence="1">Belongs to the universal ribosomal protein uL15 family.</text>
</comment>
<dbReference type="EMBL" id="AE016823">
    <property type="protein sequence ID" value="AAS71407.1"/>
    <property type="molecule type" value="Genomic_DNA"/>
</dbReference>
<dbReference type="RefSeq" id="WP_000712192.1">
    <property type="nucleotide sequence ID" value="NC_005823.1"/>
</dbReference>
<dbReference type="SMR" id="Q72NI0"/>
<dbReference type="GeneID" id="61142728"/>
<dbReference type="KEGG" id="lic:LIC_12854"/>
<dbReference type="HOGENOM" id="CLU_055188_4_0_12"/>
<dbReference type="Proteomes" id="UP000007037">
    <property type="component" value="Chromosome I"/>
</dbReference>
<dbReference type="GO" id="GO:0022625">
    <property type="term" value="C:cytosolic large ribosomal subunit"/>
    <property type="evidence" value="ECO:0007669"/>
    <property type="project" value="TreeGrafter"/>
</dbReference>
<dbReference type="GO" id="GO:0019843">
    <property type="term" value="F:rRNA binding"/>
    <property type="evidence" value="ECO:0007669"/>
    <property type="project" value="UniProtKB-UniRule"/>
</dbReference>
<dbReference type="GO" id="GO:0003735">
    <property type="term" value="F:structural constituent of ribosome"/>
    <property type="evidence" value="ECO:0007669"/>
    <property type="project" value="InterPro"/>
</dbReference>
<dbReference type="GO" id="GO:0006412">
    <property type="term" value="P:translation"/>
    <property type="evidence" value="ECO:0007669"/>
    <property type="project" value="UniProtKB-UniRule"/>
</dbReference>
<dbReference type="Gene3D" id="3.100.10.10">
    <property type="match status" value="1"/>
</dbReference>
<dbReference type="HAMAP" id="MF_01341">
    <property type="entry name" value="Ribosomal_uL15"/>
    <property type="match status" value="1"/>
</dbReference>
<dbReference type="InterPro" id="IPR030878">
    <property type="entry name" value="Ribosomal_uL15"/>
</dbReference>
<dbReference type="InterPro" id="IPR021131">
    <property type="entry name" value="Ribosomal_uL15/eL18"/>
</dbReference>
<dbReference type="InterPro" id="IPR036227">
    <property type="entry name" value="Ribosomal_uL15/eL18_sf"/>
</dbReference>
<dbReference type="InterPro" id="IPR005749">
    <property type="entry name" value="Ribosomal_uL15_bac-type"/>
</dbReference>
<dbReference type="InterPro" id="IPR001196">
    <property type="entry name" value="Ribosomal_uL15_CS"/>
</dbReference>
<dbReference type="NCBIfam" id="TIGR01071">
    <property type="entry name" value="rplO_bact"/>
    <property type="match status" value="1"/>
</dbReference>
<dbReference type="PANTHER" id="PTHR12934">
    <property type="entry name" value="50S RIBOSOMAL PROTEIN L15"/>
    <property type="match status" value="1"/>
</dbReference>
<dbReference type="PANTHER" id="PTHR12934:SF11">
    <property type="entry name" value="LARGE RIBOSOMAL SUBUNIT PROTEIN UL15M"/>
    <property type="match status" value="1"/>
</dbReference>
<dbReference type="Pfam" id="PF00828">
    <property type="entry name" value="Ribosomal_L27A"/>
    <property type="match status" value="1"/>
</dbReference>
<dbReference type="SUPFAM" id="SSF52080">
    <property type="entry name" value="Ribosomal proteins L15p and L18e"/>
    <property type="match status" value="1"/>
</dbReference>
<dbReference type="PROSITE" id="PS00475">
    <property type="entry name" value="RIBOSOMAL_L15"/>
    <property type="match status" value="1"/>
</dbReference>
<accession>Q72NI0</accession>